<accession>Q4R989</accession>
<organism>
    <name type="scientific">Macaca fascicularis</name>
    <name type="common">Crab-eating macaque</name>
    <name type="synonym">Cynomolgus monkey</name>
    <dbReference type="NCBI Taxonomy" id="9541"/>
    <lineage>
        <taxon>Eukaryota</taxon>
        <taxon>Metazoa</taxon>
        <taxon>Chordata</taxon>
        <taxon>Craniata</taxon>
        <taxon>Vertebrata</taxon>
        <taxon>Euteleostomi</taxon>
        <taxon>Mammalia</taxon>
        <taxon>Eutheria</taxon>
        <taxon>Euarchontoglires</taxon>
        <taxon>Primates</taxon>
        <taxon>Haplorrhini</taxon>
        <taxon>Catarrhini</taxon>
        <taxon>Cercopithecidae</taxon>
        <taxon>Cercopithecinae</taxon>
        <taxon>Macaca</taxon>
    </lineage>
</organism>
<dbReference type="EMBL" id="AB168207">
    <property type="protein sequence ID" value="BAE00332.1"/>
    <property type="molecule type" value="mRNA"/>
</dbReference>
<dbReference type="RefSeq" id="NP_001271728.1">
    <property type="nucleotide sequence ID" value="NM_001284799.1"/>
</dbReference>
<dbReference type="RefSeq" id="XP_045238926.2">
    <property type="nucleotide sequence ID" value="XM_045382991.2"/>
</dbReference>
<dbReference type="SMR" id="Q4R989"/>
<dbReference type="STRING" id="9541.ENSMFAP00000037797"/>
<dbReference type="GeneID" id="101926579"/>
<dbReference type="eggNOG" id="ENOG502RYRV">
    <property type="taxonomic scope" value="Eukaryota"/>
</dbReference>
<dbReference type="Proteomes" id="UP000233100">
    <property type="component" value="Unplaced"/>
</dbReference>
<dbReference type="Gene3D" id="2.30.42.10">
    <property type="match status" value="1"/>
</dbReference>
<dbReference type="InterPro" id="IPR001478">
    <property type="entry name" value="PDZ"/>
</dbReference>
<dbReference type="InterPro" id="IPR036034">
    <property type="entry name" value="PDZ_sf"/>
</dbReference>
<dbReference type="InterPro" id="IPR039179">
    <property type="entry name" value="PDZD9"/>
</dbReference>
<dbReference type="PANTHER" id="PTHR22698">
    <property type="entry name" value="PDZ DOMAIN-CONTAINING PROTEIN 9"/>
    <property type="match status" value="1"/>
</dbReference>
<dbReference type="PANTHER" id="PTHR22698:SF1">
    <property type="entry name" value="PDZ DOMAIN-CONTAINING PROTEIN 9"/>
    <property type="match status" value="1"/>
</dbReference>
<dbReference type="Pfam" id="PF00595">
    <property type="entry name" value="PDZ"/>
    <property type="match status" value="1"/>
</dbReference>
<dbReference type="SMART" id="SM00228">
    <property type="entry name" value="PDZ"/>
    <property type="match status" value="1"/>
</dbReference>
<dbReference type="SUPFAM" id="SSF50156">
    <property type="entry name" value="PDZ domain-like"/>
    <property type="match status" value="1"/>
</dbReference>
<dbReference type="PROSITE" id="PS50106">
    <property type="entry name" value="PDZ"/>
    <property type="match status" value="1"/>
</dbReference>
<protein>
    <recommendedName>
        <fullName>PDZ domain-containing protein 9</fullName>
    </recommendedName>
</protein>
<name>PDZD9_MACFA</name>
<proteinExistence type="evidence at transcript level"/>
<keyword id="KW-1185">Reference proteome</keyword>
<evidence type="ECO:0000255" key="1">
    <source>
        <dbReference type="PROSITE-ProRule" id="PRU00143"/>
    </source>
</evidence>
<feature type="chain" id="PRO_0000271216" description="PDZ domain-containing protein 9">
    <location>
        <begin position="1"/>
        <end position="264"/>
    </location>
</feature>
<feature type="domain" description="PDZ" evidence="1">
    <location>
        <begin position="22"/>
        <end position="109"/>
    </location>
</feature>
<sequence>MQKASRKNKKERGVSIKVKTSVHNLSKTQQTKLTVGRLGLGLIIIQHGPYLQITHLIRKGAAANDGKLQPGDVLISVGYANVLGYTLREFLQLLQHITVGTVLQIKVYRDFINIPEEWLEIYDLIPEAKFPVTSTPKKMELAKDESFTSSDDNENVDLDRRLQYYRYPWSTAHHPARRPISISRDWHGYKKKNHTISVGKDIDCDVMIHRDDKKEVKAPSPYWIMVKQDNETSSSSTSSTSDAFWLEDCAQVEEGKAQPVSKFG</sequence>
<gene>
    <name type="primary">PDZD9</name>
    <name type="ORF">QtsA-10527</name>
</gene>
<reference key="1">
    <citation type="submission" date="2005-06" db="EMBL/GenBank/DDBJ databases">
        <title>Isolation of full-length cDNA clones from macaque brain cDNA libraries.</title>
        <authorList>
            <person name="Osada N."/>
            <person name="Hida M."/>
            <person name="Kusuda J."/>
            <person name="Tanuma R."/>
            <person name="Iseki K."/>
            <person name="Hirai M."/>
            <person name="Terao K."/>
            <person name="Suzuki Y."/>
            <person name="Sugano S."/>
            <person name="Hashimoto K."/>
        </authorList>
    </citation>
    <scope>NUCLEOTIDE SEQUENCE [LARGE SCALE MRNA]</scope>
    <source>
        <tissue>Testis</tissue>
    </source>
</reference>